<organism>
    <name type="scientific">Rattus norvegicus</name>
    <name type="common">Rat</name>
    <dbReference type="NCBI Taxonomy" id="10116"/>
    <lineage>
        <taxon>Eukaryota</taxon>
        <taxon>Metazoa</taxon>
        <taxon>Chordata</taxon>
        <taxon>Craniata</taxon>
        <taxon>Vertebrata</taxon>
        <taxon>Euteleostomi</taxon>
        <taxon>Mammalia</taxon>
        <taxon>Eutheria</taxon>
        <taxon>Euarchontoglires</taxon>
        <taxon>Glires</taxon>
        <taxon>Rodentia</taxon>
        <taxon>Myomorpha</taxon>
        <taxon>Muroidea</taxon>
        <taxon>Muridae</taxon>
        <taxon>Murinae</taxon>
        <taxon>Rattus</taxon>
    </lineage>
</organism>
<evidence type="ECO:0000250" key="1"/>
<proteinExistence type="evidence at transcript level"/>
<reference key="1">
    <citation type="journal article" date="2004" name="Genome Res.">
        <title>The status, quality, and expansion of the NIH full-length cDNA project: the Mammalian Gene Collection (MGC).</title>
        <authorList>
            <consortium name="The MGC Project Team"/>
        </authorList>
    </citation>
    <scope>NUCLEOTIDE SEQUENCE [LARGE SCALE MRNA]</scope>
    <source>
        <tissue>Testis</tissue>
    </source>
</reference>
<sequence length="357" mass="41984">MPFLGQDWRSPGWSWIKTEDGWKRCDPCSHEIRSEDNQYPVNHSIILNSGEEEIFNNDCEYAAKKRKKQHFGNDTAAHSFYREKWIYVHKESTKERHGYCTLGEAFNRLDFSSAIQDIRRFTYVVKLLQLIAKSQLTSLSGVAQKNYFNILDKIVQKVLDDHQNPRLIKDLLQDLSSTLCILVRGVGKSVLVGNINIWICRLETVLNWQEKLQNLQMTKQVNTGLTLSDLPLHMLNNILYRFSDGWDIVTLGQVTPTLYMLSEDRRLWKRLCQYHFAEKQFCRHLILSEKGHIEWKLMYFTLQKYYPTKEQYGDTLHFCRHCSILFWKDSGHPCTAADPDSCFTPVSPEHFIDLFKF</sequence>
<keyword id="KW-0539">Nucleus</keyword>
<keyword id="KW-1185">Reference proteome</keyword>
<keyword id="KW-0833">Ubl conjugation pathway</keyword>
<gene>
    <name type="primary">Fbxo25</name>
</gene>
<name>FBX25_RAT</name>
<feature type="chain" id="PRO_0000119913" description="F-box only protein 25">
    <location>
        <begin position="1"/>
        <end position="357"/>
    </location>
</feature>
<feature type="domain" description="F-box">
    <location>
        <begin position="224"/>
        <end position="271"/>
    </location>
</feature>
<feature type="region of interest" description="Interaction with beta-actin" evidence="1">
    <location>
        <begin position="1"/>
        <end position="83"/>
    </location>
</feature>
<accession>Q641X7</accession>
<comment type="function">
    <text evidence="1">Substrate-recognition component of the SCF (SKP1-CUL1-F-box protein)-type E3 ubiquitin ligase complex. May play a role in accumulation of expanded polyglutamine (polyQ) protein huntingtin (HTT) (By similarity).</text>
</comment>
<comment type="pathway">
    <text>Protein modification; protein ubiquitination.</text>
</comment>
<comment type="subunit">
    <text evidence="1">Part of a SCF (SKP1-cullin-F-box) protein ligase complex consisting of FBXO25, SKP1, CUL1 and RBX1. Interacts directly with SKP1 and CUL1 (By similarity). Interacts (via C-terminus) with actin (via N-terminus) (By similarity).</text>
</comment>
<comment type="subcellular location">
    <subcellularLocation>
        <location evidence="1">Nucleus</location>
    </subcellularLocation>
    <text>In the nucleus, associates with a specific and novel subnuclear dot-like structure.</text>
</comment>
<comment type="domain">
    <text evidence="1">The F-box is necessary for the interaction with SKP1.</text>
</comment>
<protein>
    <recommendedName>
        <fullName>F-box only protein 25</fullName>
    </recommendedName>
</protein>
<dbReference type="EMBL" id="BC082088">
    <property type="protein sequence ID" value="AAH82088.1"/>
    <property type="molecule type" value="mRNA"/>
</dbReference>
<dbReference type="RefSeq" id="NP_001014261.1">
    <property type="nucleotide sequence ID" value="NM_001014239.2"/>
</dbReference>
<dbReference type="FunCoup" id="Q641X7">
    <property type="interactions" value="2186"/>
</dbReference>
<dbReference type="STRING" id="10116.ENSRNOP00000061613"/>
<dbReference type="iPTMnet" id="Q641X7"/>
<dbReference type="PhosphoSitePlus" id="Q641X7"/>
<dbReference type="GeneID" id="364637"/>
<dbReference type="KEGG" id="rno:364637"/>
<dbReference type="AGR" id="RGD:1359105"/>
<dbReference type="CTD" id="26260"/>
<dbReference type="RGD" id="1359105">
    <property type="gene designation" value="Fbxo25"/>
</dbReference>
<dbReference type="InParanoid" id="Q641X7"/>
<dbReference type="PhylomeDB" id="Q641X7"/>
<dbReference type="UniPathway" id="UPA00143"/>
<dbReference type="PRO" id="PR:Q641X7"/>
<dbReference type="Proteomes" id="UP000002494">
    <property type="component" value="Unplaced"/>
</dbReference>
<dbReference type="GO" id="GO:0005737">
    <property type="term" value="C:cytoplasm"/>
    <property type="evidence" value="ECO:0000318"/>
    <property type="project" value="GO_Central"/>
</dbReference>
<dbReference type="GO" id="GO:0005634">
    <property type="term" value="C:nucleus"/>
    <property type="evidence" value="ECO:0000250"/>
    <property type="project" value="UniProtKB"/>
</dbReference>
<dbReference type="GO" id="GO:0019005">
    <property type="term" value="C:SCF ubiquitin ligase complex"/>
    <property type="evidence" value="ECO:0000250"/>
    <property type="project" value="UniProtKB"/>
</dbReference>
<dbReference type="GO" id="GO:0016567">
    <property type="term" value="P:protein ubiquitination"/>
    <property type="evidence" value="ECO:0000250"/>
    <property type="project" value="UniProtKB"/>
</dbReference>
<dbReference type="CDD" id="cd22099">
    <property type="entry name" value="F-box_FBXO25"/>
    <property type="match status" value="1"/>
</dbReference>
<dbReference type="Gene3D" id="1.20.1280.50">
    <property type="match status" value="1"/>
</dbReference>
<dbReference type="InterPro" id="IPR036047">
    <property type="entry name" value="F-box-like_dom_sf"/>
</dbReference>
<dbReference type="InterPro" id="IPR040394">
    <property type="entry name" value="FBX25/32"/>
</dbReference>
<dbReference type="PANTHER" id="PTHR13123:SF8">
    <property type="entry name" value="F-BOX ONLY PROTEIN 25"/>
    <property type="match status" value="1"/>
</dbReference>
<dbReference type="PANTHER" id="PTHR13123">
    <property type="entry name" value="LD30288P"/>
    <property type="match status" value="1"/>
</dbReference>
<dbReference type="SUPFAM" id="SSF81383">
    <property type="entry name" value="F-box domain"/>
    <property type="match status" value="1"/>
</dbReference>